<reference key="1">
    <citation type="submission" date="2009-02" db="EMBL/GenBank/DDBJ databases">
        <title>Vibrio splendidus str. LGP32 complete genome.</title>
        <authorList>
            <person name="Mazel D."/>
            <person name="Le Roux F."/>
        </authorList>
    </citation>
    <scope>NUCLEOTIDE SEQUENCE [LARGE SCALE GENOMIC DNA]</scope>
    <source>
        <strain>LGP32</strain>
    </source>
</reference>
<keyword id="KW-0963">Cytoplasm</keyword>
<keyword id="KW-0350">Heme biosynthesis</keyword>
<keyword id="KW-0479">Metal-binding</keyword>
<keyword id="KW-0560">Oxidoreductase</keyword>
<keyword id="KW-0627">Porphyrin biosynthesis</keyword>
<feature type="chain" id="PRO_1000189697" description="Oxygen-dependent coproporphyrinogen-III oxidase">
    <location>
        <begin position="1"/>
        <end position="305"/>
    </location>
</feature>
<feature type="region of interest" description="Important for dimerization" evidence="1">
    <location>
        <begin position="246"/>
        <end position="281"/>
    </location>
</feature>
<feature type="active site" description="Proton donor" evidence="1">
    <location>
        <position position="112"/>
    </location>
</feature>
<feature type="binding site" evidence="1">
    <location>
        <position position="98"/>
    </location>
    <ligand>
        <name>substrate</name>
    </ligand>
</feature>
<feature type="binding site" evidence="1">
    <location>
        <position position="102"/>
    </location>
    <ligand>
        <name>a divalent metal cation</name>
        <dbReference type="ChEBI" id="CHEBI:60240"/>
    </ligand>
</feature>
<feature type="binding site" evidence="1">
    <location>
        <position position="112"/>
    </location>
    <ligand>
        <name>a divalent metal cation</name>
        <dbReference type="ChEBI" id="CHEBI:60240"/>
    </ligand>
</feature>
<feature type="binding site" evidence="1">
    <location>
        <begin position="114"/>
        <end position="116"/>
    </location>
    <ligand>
        <name>substrate</name>
    </ligand>
</feature>
<feature type="binding site" evidence="1">
    <location>
        <position position="151"/>
    </location>
    <ligand>
        <name>a divalent metal cation</name>
        <dbReference type="ChEBI" id="CHEBI:60240"/>
    </ligand>
</feature>
<feature type="binding site" evidence="1">
    <location>
        <position position="181"/>
    </location>
    <ligand>
        <name>a divalent metal cation</name>
        <dbReference type="ChEBI" id="CHEBI:60240"/>
    </ligand>
</feature>
<feature type="binding site" evidence="1">
    <location>
        <begin position="264"/>
        <end position="266"/>
    </location>
    <ligand>
        <name>substrate</name>
    </ligand>
</feature>
<feature type="site" description="Important for dimerization" evidence="1">
    <location>
        <position position="181"/>
    </location>
</feature>
<proteinExistence type="inferred from homology"/>
<accession>B7VMW3</accession>
<evidence type="ECO:0000255" key="1">
    <source>
        <dbReference type="HAMAP-Rule" id="MF_00333"/>
    </source>
</evidence>
<dbReference type="EC" id="1.3.3.3" evidence="1"/>
<dbReference type="EMBL" id="FM954972">
    <property type="protein sequence ID" value="CAV20371.1"/>
    <property type="molecule type" value="Genomic_DNA"/>
</dbReference>
<dbReference type="SMR" id="B7VMW3"/>
<dbReference type="STRING" id="575788.VS_3118"/>
<dbReference type="KEGG" id="vsp:VS_3118"/>
<dbReference type="PATRIC" id="fig|575788.5.peg.4280"/>
<dbReference type="eggNOG" id="COG0408">
    <property type="taxonomic scope" value="Bacteria"/>
</dbReference>
<dbReference type="HOGENOM" id="CLU_026169_0_1_6"/>
<dbReference type="UniPathway" id="UPA00251">
    <property type="reaction ID" value="UER00322"/>
</dbReference>
<dbReference type="Proteomes" id="UP000009100">
    <property type="component" value="Chromosome 1"/>
</dbReference>
<dbReference type="GO" id="GO:0005737">
    <property type="term" value="C:cytoplasm"/>
    <property type="evidence" value="ECO:0007669"/>
    <property type="project" value="UniProtKB-SubCell"/>
</dbReference>
<dbReference type="GO" id="GO:0004109">
    <property type="term" value="F:coproporphyrinogen oxidase activity"/>
    <property type="evidence" value="ECO:0007669"/>
    <property type="project" value="UniProtKB-UniRule"/>
</dbReference>
<dbReference type="GO" id="GO:0046872">
    <property type="term" value="F:metal ion binding"/>
    <property type="evidence" value="ECO:0007669"/>
    <property type="project" value="UniProtKB-KW"/>
</dbReference>
<dbReference type="GO" id="GO:0042803">
    <property type="term" value="F:protein homodimerization activity"/>
    <property type="evidence" value="ECO:0000250"/>
    <property type="project" value="UniProtKB"/>
</dbReference>
<dbReference type="GO" id="GO:0006782">
    <property type="term" value="P:protoporphyrinogen IX biosynthetic process"/>
    <property type="evidence" value="ECO:0007669"/>
    <property type="project" value="UniProtKB-UniRule"/>
</dbReference>
<dbReference type="FunFam" id="3.40.1500.10:FF:000001">
    <property type="entry name" value="Oxygen-dependent coproporphyrinogen-III oxidase"/>
    <property type="match status" value="1"/>
</dbReference>
<dbReference type="Gene3D" id="3.40.1500.10">
    <property type="entry name" value="Coproporphyrinogen III oxidase, aerobic"/>
    <property type="match status" value="1"/>
</dbReference>
<dbReference type="HAMAP" id="MF_00333">
    <property type="entry name" value="Coprogen_oxidas"/>
    <property type="match status" value="1"/>
</dbReference>
<dbReference type="InterPro" id="IPR001260">
    <property type="entry name" value="Coprogen_oxidase_aer"/>
</dbReference>
<dbReference type="InterPro" id="IPR036406">
    <property type="entry name" value="Coprogen_oxidase_aer_sf"/>
</dbReference>
<dbReference type="InterPro" id="IPR018375">
    <property type="entry name" value="Coprogen_oxidase_CS"/>
</dbReference>
<dbReference type="NCBIfam" id="NF003727">
    <property type="entry name" value="PRK05330.1"/>
    <property type="match status" value="1"/>
</dbReference>
<dbReference type="PANTHER" id="PTHR10755">
    <property type="entry name" value="COPROPORPHYRINOGEN III OXIDASE, MITOCHONDRIAL"/>
    <property type="match status" value="1"/>
</dbReference>
<dbReference type="PANTHER" id="PTHR10755:SF0">
    <property type="entry name" value="OXYGEN-DEPENDENT COPROPORPHYRINOGEN-III OXIDASE, MITOCHONDRIAL"/>
    <property type="match status" value="1"/>
</dbReference>
<dbReference type="Pfam" id="PF01218">
    <property type="entry name" value="Coprogen_oxidas"/>
    <property type="match status" value="1"/>
</dbReference>
<dbReference type="PIRSF" id="PIRSF000166">
    <property type="entry name" value="Coproporphyri_ox"/>
    <property type="match status" value="1"/>
</dbReference>
<dbReference type="PRINTS" id="PR00073">
    <property type="entry name" value="COPRGNOXDASE"/>
</dbReference>
<dbReference type="SUPFAM" id="SSF102886">
    <property type="entry name" value="Coproporphyrinogen III oxidase"/>
    <property type="match status" value="1"/>
</dbReference>
<dbReference type="PROSITE" id="PS01021">
    <property type="entry name" value="COPROGEN_OXIDASE"/>
    <property type="match status" value="1"/>
</dbReference>
<sequence length="305" mass="34881">MSAIDKEAVKQFLLSLQDSICQQLEQADGTALFEEDAWQREPGERLGGGGRTRVMTNGAVFEQGGVNFSHVAGKAMPASATAHRPELAGRKFEAMGVSLVIHPKNPYIPTSHANVRFFIAEKEGEDPIWWFGGGFDLTPFYPVDEDCQSWHQTAKDLCAPFGDDVYQEHKEWCDKYFYLPHRDETRGVGGLFFDDLNEWGFEKSFAYMQAVGEGFAAAYLPIVERRKETPYGERERDFQLYRRGRYVEFNLVYDRGTLFGLQSGGRTESILMSMPPLARWEYRYEPQACSPEALLYSDYLKPRVW</sequence>
<protein>
    <recommendedName>
        <fullName evidence="1">Oxygen-dependent coproporphyrinogen-III oxidase</fullName>
        <shortName evidence="1">CPO</shortName>
        <shortName evidence="1">Coprogen oxidase</shortName>
        <shortName evidence="1">Coproporphyrinogenase</shortName>
        <ecNumber evidence="1">1.3.3.3</ecNumber>
    </recommendedName>
</protein>
<comment type="function">
    <text evidence="1">Involved in the heme biosynthesis. Catalyzes the aerobic oxidative decarboxylation of propionate groups of rings A and B of coproporphyrinogen-III to yield the vinyl groups in protoporphyrinogen-IX.</text>
</comment>
<comment type="catalytic activity">
    <reaction evidence="1">
        <text>coproporphyrinogen III + O2 + 2 H(+) = protoporphyrinogen IX + 2 CO2 + 2 H2O</text>
        <dbReference type="Rhea" id="RHEA:18257"/>
        <dbReference type="ChEBI" id="CHEBI:15377"/>
        <dbReference type="ChEBI" id="CHEBI:15378"/>
        <dbReference type="ChEBI" id="CHEBI:15379"/>
        <dbReference type="ChEBI" id="CHEBI:16526"/>
        <dbReference type="ChEBI" id="CHEBI:57307"/>
        <dbReference type="ChEBI" id="CHEBI:57309"/>
        <dbReference type="EC" id="1.3.3.3"/>
    </reaction>
</comment>
<comment type="cofactor">
    <cofactor evidence="1">
        <name>a divalent metal cation</name>
        <dbReference type="ChEBI" id="CHEBI:60240"/>
    </cofactor>
</comment>
<comment type="pathway">
    <text evidence="1">Porphyrin-containing compound metabolism; protoporphyrin-IX biosynthesis; protoporphyrinogen-IX from coproporphyrinogen-III (O2 route): step 1/1.</text>
</comment>
<comment type="subunit">
    <text evidence="1">Homodimer.</text>
</comment>
<comment type="subcellular location">
    <subcellularLocation>
        <location evidence="1">Cytoplasm</location>
    </subcellularLocation>
</comment>
<comment type="similarity">
    <text evidence="1">Belongs to the aerobic coproporphyrinogen-III oxidase family.</text>
</comment>
<organism>
    <name type="scientific">Vibrio atlanticus (strain LGP32)</name>
    <name type="common">Vibrio splendidus (strain Mel32)</name>
    <dbReference type="NCBI Taxonomy" id="575788"/>
    <lineage>
        <taxon>Bacteria</taxon>
        <taxon>Pseudomonadati</taxon>
        <taxon>Pseudomonadota</taxon>
        <taxon>Gammaproteobacteria</taxon>
        <taxon>Vibrionales</taxon>
        <taxon>Vibrionaceae</taxon>
        <taxon>Vibrio</taxon>
    </lineage>
</organism>
<gene>
    <name evidence="1" type="primary">hemF</name>
    <name type="ordered locus">VS_3118</name>
</gene>
<name>HEM6_VIBA3</name>